<proteinExistence type="inferred from homology"/>
<keyword id="KW-0479">Metal-binding</keyword>
<keyword id="KW-0687">Ribonucleoprotein</keyword>
<keyword id="KW-0689">Ribosomal protein</keyword>
<keyword id="KW-0694">RNA-binding</keyword>
<keyword id="KW-0699">rRNA-binding</keyword>
<keyword id="KW-0862">Zinc</keyword>
<organism>
    <name type="scientific">Vibrio atlanticus (strain LGP32)</name>
    <name type="common">Vibrio splendidus (strain Mel32)</name>
    <dbReference type="NCBI Taxonomy" id="575788"/>
    <lineage>
        <taxon>Bacteria</taxon>
        <taxon>Pseudomonadati</taxon>
        <taxon>Pseudomonadota</taxon>
        <taxon>Gammaproteobacteria</taxon>
        <taxon>Vibrionales</taxon>
        <taxon>Vibrionaceae</taxon>
        <taxon>Vibrio</taxon>
    </lineage>
</organism>
<gene>
    <name evidence="1" type="primary">rpmE</name>
    <name type="ordered locus">VS_2897</name>
</gene>
<sequence length="72" mass="8027">MKVGIHPEYKAVSATCSCGNTFEFNSTLAKESIHLDVCDKCHPFYTGKQRIVDTGGRVDRFNKRFGALSSKK</sequence>
<dbReference type="EMBL" id="FM954972">
    <property type="protein sequence ID" value="CAV20194.1"/>
    <property type="molecule type" value="Genomic_DNA"/>
</dbReference>
<dbReference type="SMR" id="B7VLM2"/>
<dbReference type="STRING" id="575788.VS_2897"/>
<dbReference type="KEGG" id="vsp:VS_2897"/>
<dbReference type="eggNOG" id="COG0254">
    <property type="taxonomic scope" value="Bacteria"/>
</dbReference>
<dbReference type="HOGENOM" id="CLU_114306_4_3_6"/>
<dbReference type="Proteomes" id="UP000009100">
    <property type="component" value="Chromosome 1"/>
</dbReference>
<dbReference type="GO" id="GO:1990904">
    <property type="term" value="C:ribonucleoprotein complex"/>
    <property type="evidence" value="ECO:0007669"/>
    <property type="project" value="UniProtKB-KW"/>
</dbReference>
<dbReference type="GO" id="GO:0005840">
    <property type="term" value="C:ribosome"/>
    <property type="evidence" value="ECO:0007669"/>
    <property type="project" value="UniProtKB-KW"/>
</dbReference>
<dbReference type="GO" id="GO:0046872">
    <property type="term" value="F:metal ion binding"/>
    <property type="evidence" value="ECO:0007669"/>
    <property type="project" value="UniProtKB-KW"/>
</dbReference>
<dbReference type="GO" id="GO:0019843">
    <property type="term" value="F:rRNA binding"/>
    <property type="evidence" value="ECO:0007669"/>
    <property type="project" value="UniProtKB-KW"/>
</dbReference>
<dbReference type="GO" id="GO:0003735">
    <property type="term" value="F:structural constituent of ribosome"/>
    <property type="evidence" value="ECO:0007669"/>
    <property type="project" value="InterPro"/>
</dbReference>
<dbReference type="GO" id="GO:0006412">
    <property type="term" value="P:translation"/>
    <property type="evidence" value="ECO:0007669"/>
    <property type="project" value="UniProtKB-UniRule"/>
</dbReference>
<dbReference type="Gene3D" id="4.10.830.30">
    <property type="entry name" value="Ribosomal protein L31"/>
    <property type="match status" value="1"/>
</dbReference>
<dbReference type="HAMAP" id="MF_00501">
    <property type="entry name" value="Ribosomal_bL31_1"/>
    <property type="match status" value="1"/>
</dbReference>
<dbReference type="InterPro" id="IPR034704">
    <property type="entry name" value="Ribosomal_bL28/bL31-like_sf"/>
</dbReference>
<dbReference type="InterPro" id="IPR002150">
    <property type="entry name" value="Ribosomal_bL31"/>
</dbReference>
<dbReference type="InterPro" id="IPR027491">
    <property type="entry name" value="Ribosomal_bL31_A"/>
</dbReference>
<dbReference type="InterPro" id="IPR042105">
    <property type="entry name" value="Ribosomal_bL31_sf"/>
</dbReference>
<dbReference type="NCBIfam" id="TIGR00105">
    <property type="entry name" value="L31"/>
    <property type="match status" value="1"/>
</dbReference>
<dbReference type="NCBIfam" id="NF000612">
    <property type="entry name" value="PRK00019.1"/>
    <property type="match status" value="1"/>
</dbReference>
<dbReference type="NCBIfam" id="NF001809">
    <property type="entry name" value="PRK00528.1"/>
    <property type="match status" value="1"/>
</dbReference>
<dbReference type="PANTHER" id="PTHR33280">
    <property type="entry name" value="50S RIBOSOMAL PROTEIN L31, CHLOROPLASTIC"/>
    <property type="match status" value="1"/>
</dbReference>
<dbReference type="PANTHER" id="PTHR33280:SF6">
    <property type="entry name" value="LARGE RIBOSOMAL SUBUNIT PROTEIN BL31A"/>
    <property type="match status" value="1"/>
</dbReference>
<dbReference type="Pfam" id="PF01197">
    <property type="entry name" value="Ribosomal_L31"/>
    <property type="match status" value="1"/>
</dbReference>
<dbReference type="PRINTS" id="PR01249">
    <property type="entry name" value="RIBOSOMALL31"/>
</dbReference>
<dbReference type="SUPFAM" id="SSF143800">
    <property type="entry name" value="L28p-like"/>
    <property type="match status" value="1"/>
</dbReference>
<dbReference type="PROSITE" id="PS01143">
    <property type="entry name" value="RIBOSOMAL_L31"/>
    <property type="match status" value="1"/>
</dbReference>
<feature type="chain" id="PRO_1000176978" description="Large ribosomal subunit protein bL31">
    <location>
        <begin position="1"/>
        <end position="72"/>
    </location>
</feature>
<feature type="binding site" evidence="1">
    <location>
        <position position="16"/>
    </location>
    <ligand>
        <name>Zn(2+)</name>
        <dbReference type="ChEBI" id="CHEBI:29105"/>
    </ligand>
</feature>
<feature type="binding site" evidence="1">
    <location>
        <position position="18"/>
    </location>
    <ligand>
        <name>Zn(2+)</name>
        <dbReference type="ChEBI" id="CHEBI:29105"/>
    </ligand>
</feature>
<feature type="binding site" evidence="1">
    <location>
        <position position="38"/>
    </location>
    <ligand>
        <name>Zn(2+)</name>
        <dbReference type="ChEBI" id="CHEBI:29105"/>
    </ligand>
</feature>
<feature type="binding site" evidence="1">
    <location>
        <position position="41"/>
    </location>
    <ligand>
        <name>Zn(2+)</name>
        <dbReference type="ChEBI" id="CHEBI:29105"/>
    </ligand>
</feature>
<comment type="function">
    <text evidence="1">Binds the 23S rRNA.</text>
</comment>
<comment type="cofactor">
    <cofactor evidence="1">
        <name>Zn(2+)</name>
        <dbReference type="ChEBI" id="CHEBI:29105"/>
    </cofactor>
    <text evidence="1">Binds 1 zinc ion per subunit.</text>
</comment>
<comment type="subunit">
    <text evidence="1">Part of the 50S ribosomal subunit.</text>
</comment>
<comment type="similarity">
    <text evidence="1">Belongs to the bacterial ribosomal protein bL31 family. Type A subfamily.</text>
</comment>
<name>RL31_VIBA3</name>
<protein>
    <recommendedName>
        <fullName evidence="1">Large ribosomal subunit protein bL31</fullName>
    </recommendedName>
    <alternativeName>
        <fullName evidence="2">50S ribosomal protein L31</fullName>
    </alternativeName>
</protein>
<evidence type="ECO:0000255" key="1">
    <source>
        <dbReference type="HAMAP-Rule" id="MF_00501"/>
    </source>
</evidence>
<evidence type="ECO:0000305" key="2"/>
<reference key="1">
    <citation type="submission" date="2009-02" db="EMBL/GenBank/DDBJ databases">
        <title>Vibrio splendidus str. LGP32 complete genome.</title>
        <authorList>
            <person name="Mazel D."/>
            <person name="Le Roux F."/>
        </authorList>
    </citation>
    <scope>NUCLEOTIDE SEQUENCE [LARGE SCALE GENOMIC DNA]</scope>
    <source>
        <strain>LGP32</strain>
    </source>
</reference>
<accession>B7VLM2</accession>